<organism>
    <name type="scientific">Arabidopsis thaliana</name>
    <name type="common">Mouse-ear cress</name>
    <dbReference type="NCBI Taxonomy" id="3702"/>
    <lineage>
        <taxon>Eukaryota</taxon>
        <taxon>Viridiplantae</taxon>
        <taxon>Streptophyta</taxon>
        <taxon>Embryophyta</taxon>
        <taxon>Tracheophyta</taxon>
        <taxon>Spermatophyta</taxon>
        <taxon>Magnoliopsida</taxon>
        <taxon>eudicotyledons</taxon>
        <taxon>Gunneridae</taxon>
        <taxon>Pentapetalae</taxon>
        <taxon>rosids</taxon>
        <taxon>malvids</taxon>
        <taxon>Brassicales</taxon>
        <taxon>Brassicaceae</taxon>
        <taxon>Camelineae</taxon>
        <taxon>Arabidopsis</taxon>
    </lineage>
</organism>
<proteinExistence type="evidence at transcript level"/>
<accession>Q9M9R6</accession>
<name>PPR43_ARATH</name>
<protein>
    <recommendedName>
        <fullName>Pentatricopeptide repeat-containing protein At1g14470</fullName>
    </recommendedName>
</protein>
<feature type="chain" id="PRO_0000342784" description="Pentatricopeptide repeat-containing protein At1g14470">
    <location>
        <begin position="1"/>
        <end position="540"/>
    </location>
</feature>
<feature type="repeat" description="PPR 1">
    <location>
        <begin position="70"/>
        <end position="104"/>
    </location>
</feature>
<feature type="repeat" description="PPR 2">
    <location>
        <begin position="105"/>
        <end position="134"/>
    </location>
</feature>
<feature type="repeat" description="PPR 3">
    <location>
        <begin position="135"/>
        <end position="165"/>
    </location>
</feature>
<feature type="repeat" description="PPR 4">
    <location>
        <begin position="166"/>
        <end position="196"/>
    </location>
</feature>
<feature type="repeat" description="PPR 5">
    <location>
        <begin position="197"/>
        <end position="227"/>
    </location>
</feature>
<feature type="repeat" description="PPR 6">
    <location>
        <begin position="228"/>
        <end position="262"/>
    </location>
</feature>
<feature type="repeat" description="PPR 7">
    <location>
        <begin position="263"/>
        <end position="297"/>
    </location>
</feature>
<feature type="repeat" description="PPR 8">
    <location>
        <begin position="298"/>
        <end position="328"/>
    </location>
</feature>
<feature type="repeat" description="PPR 9">
    <location>
        <begin position="330"/>
        <end position="364"/>
    </location>
</feature>
<feature type="repeat" description="PPR 10">
    <location>
        <begin position="365"/>
        <end position="395"/>
    </location>
</feature>
<feature type="repeat" description="PPR 11">
    <location>
        <begin position="397"/>
        <end position="431"/>
    </location>
</feature>
<feature type="repeat" description="PPR 12">
    <location>
        <begin position="432"/>
        <end position="462"/>
    </location>
</feature>
<feature type="repeat" description="PPR 13">
    <location>
        <begin position="463"/>
        <end position="497"/>
    </location>
</feature>
<feature type="repeat" description="PPR 14">
    <location>
        <begin position="498"/>
        <end position="528"/>
    </location>
</feature>
<keyword id="KW-1185">Reference proteome</keyword>
<keyword id="KW-0677">Repeat</keyword>
<evidence type="ECO:0000305" key="1"/>
<reference key="1">
    <citation type="journal article" date="2000" name="Nature">
        <title>Sequence and analysis of chromosome 1 of the plant Arabidopsis thaliana.</title>
        <authorList>
            <person name="Theologis A."/>
            <person name="Ecker J.R."/>
            <person name="Palm C.J."/>
            <person name="Federspiel N.A."/>
            <person name="Kaul S."/>
            <person name="White O."/>
            <person name="Alonso J."/>
            <person name="Altafi H."/>
            <person name="Araujo R."/>
            <person name="Bowman C.L."/>
            <person name="Brooks S.Y."/>
            <person name="Buehler E."/>
            <person name="Chan A."/>
            <person name="Chao Q."/>
            <person name="Chen H."/>
            <person name="Cheuk R.F."/>
            <person name="Chin C.W."/>
            <person name="Chung M.K."/>
            <person name="Conn L."/>
            <person name="Conway A.B."/>
            <person name="Conway A.R."/>
            <person name="Creasy T.H."/>
            <person name="Dewar K."/>
            <person name="Dunn P."/>
            <person name="Etgu P."/>
            <person name="Feldblyum T.V."/>
            <person name="Feng J.-D."/>
            <person name="Fong B."/>
            <person name="Fujii C.Y."/>
            <person name="Gill J.E."/>
            <person name="Goldsmith A.D."/>
            <person name="Haas B."/>
            <person name="Hansen N.F."/>
            <person name="Hughes B."/>
            <person name="Huizar L."/>
            <person name="Hunter J.L."/>
            <person name="Jenkins J."/>
            <person name="Johnson-Hopson C."/>
            <person name="Khan S."/>
            <person name="Khaykin E."/>
            <person name="Kim C.J."/>
            <person name="Koo H.L."/>
            <person name="Kremenetskaia I."/>
            <person name="Kurtz D.B."/>
            <person name="Kwan A."/>
            <person name="Lam B."/>
            <person name="Langin-Hooper S."/>
            <person name="Lee A."/>
            <person name="Lee J.M."/>
            <person name="Lenz C.A."/>
            <person name="Li J.H."/>
            <person name="Li Y.-P."/>
            <person name="Lin X."/>
            <person name="Liu S.X."/>
            <person name="Liu Z.A."/>
            <person name="Luros J.S."/>
            <person name="Maiti R."/>
            <person name="Marziali A."/>
            <person name="Militscher J."/>
            <person name="Miranda M."/>
            <person name="Nguyen M."/>
            <person name="Nierman W.C."/>
            <person name="Osborne B.I."/>
            <person name="Pai G."/>
            <person name="Peterson J."/>
            <person name="Pham P.K."/>
            <person name="Rizzo M."/>
            <person name="Rooney T."/>
            <person name="Rowley D."/>
            <person name="Sakano H."/>
            <person name="Salzberg S.L."/>
            <person name="Schwartz J.R."/>
            <person name="Shinn P."/>
            <person name="Southwick A.M."/>
            <person name="Sun H."/>
            <person name="Tallon L.J."/>
            <person name="Tambunga G."/>
            <person name="Toriumi M.J."/>
            <person name="Town C.D."/>
            <person name="Utterback T."/>
            <person name="Van Aken S."/>
            <person name="Vaysberg M."/>
            <person name="Vysotskaia V.S."/>
            <person name="Walker M."/>
            <person name="Wu D."/>
            <person name="Yu G."/>
            <person name="Fraser C.M."/>
            <person name="Venter J.C."/>
            <person name="Davis R.W."/>
        </authorList>
    </citation>
    <scope>NUCLEOTIDE SEQUENCE [LARGE SCALE GENOMIC DNA]</scope>
    <source>
        <strain>cv. Columbia</strain>
    </source>
</reference>
<reference key="2">
    <citation type="journal article" date="2017" name="Plant J.">
        <title>Araport11: a complete reannotation of the Arabidopsis thaliana reference genome.</title>
        <authorList>
            <person name="Cheng C.Y."/>
            <person name="Krishnakumar V."/>
            <person name="Chan A.P."/>
            <person name="Thibaud-Nissen F."/>
            <person name="Schobel S."/>
            <person name="Town C.D."/>
        </authorList>
    </citation>
    <scope>GENOME REANNOTATION</scope>
    <source>
        <strain>cv. Columbia</strain>
    </source>
</reference>
<reference key="3">
    <citation type="journal article" date="2004" name="Plant Cell">
        <title>Genome-wide analysis of Arabidopsis pentatricopeptide repeat proteins reveals their essential role in organelle biogenesis.</title>
        <authorList>
            <person name="Lurin C."/>
            <person name="Andres C."/>
            <person name="Aubourg S."/>
            <person name="Bellaoui M."/>
            <person name="Bitton F."/>
            <person name="Bruyere C."/>
            <person name="Caboche M."/>
            <person name="Debast C."/>
            <person name="Gualberto J."/>
            <person name="Hoffmann B."/>
            <person name="Lecharny A."/>
            <person name="Le Ret M."/>
            <person name="Martin-Magniette M.-L."/>
            <person name="Mireau H."/>
            <person name="Peeters N."/>
            <person name="Renou J.-P."/>
            <person name="Szurek B."/>
            <person name="Taconnat L."/>
            <person name="Small I."/>
        </authorList>
    </citation>
    <scope>GENE FAMILY</scope>
</reference>
<gene>
    <name type="primary">PCMP-A4</name>
    <name type="ordered locus">At1g14470</name>
    <name type="ORF">F14L17.25</name>
</gene>
<comment type="similarity">
    <text evidence="1">Belongs to the PPR family. PCMP-A subfamily.</text>
</comment>
<comment type="sequence caution" evidence="1">
    <conflict type="erroneous initiation">
        <sequence resource="EMBL-CDS" id="AAF43948"/>
    </conflict>
</comment>
<comment type="online information" name="Pentatricopeptide repeat proteins">
    <link uri="https://ppr.plantenergy.uwa.edu.au"/>
</comment>
<sequence length="540" mass="61742">MSRELTVSLAAIASQALTFPQLNQIHAQLIVFNSLPRQSYWASRIISCCTRLRAPSYYTRLIFDSVTFPNVFVVNSMFKYFSKMDMANDVLRLYEQRSRCGIMPDAFSFPVVIKSAGRFGILFQALVEKLGFFKDPYVRNVIMDMYVKHESVESARKVFDQISQRKGSDWNVMISGYWKWGNKEEACKLFDMMPENDVVSWTVMITGFAKVKDLENARKYFDRMPEKSVVSWNAMLSGYAQNGFTEDALRLFNDMLRLGVRPNETTWVIVISACSFRADPSLTRSLVKLIDEKRVRLNCFVKTALLDMHAKCRDIQSARRIFNELGTQRNLVTWNAMISGYTRIGDMSSARQLFDTMPKRNVVSWNSLIAGYAHNGQAALAIEFFEDMIDYGDSKPDEVTMISVLSACGHMADLELGDCIVDYIRKNQIKLNDSGYRSLIFMYARGGNLWEAKRVFDEMKERDVVSYNTLFTAFAANGDGVETLNLLSKMKDEGIEPDRVTYTSVLTACNRAGLLKEGQRIFKSIRNPLADHYACMDLLR</sequence>
<dbReference type="EMBL" id="AC012188">
    <property type="protein sequence ID" value="AAF43948.1"/>
    <property type="status" value="ALT_INIT"/>
    <property type="molecule type" value="Genomic_DNA"/>
</dbReference>
<dbReference type="EMBL" id="CP002684">
    <property type="protein sequence ID" value="AEE29168.1"/>
    <property type="molecule type" value="Genomic_DNA"/>
</dbReference>
<dbReference type="PIR" id="E86279">
    <property type="entry name" value="E86279"/>
</dbReference>
<dbReference type="RefSeq" id="NP_172899.1">
    <property type="nucleotide sequence ID" value="NM_101314.2"/>
</dbReference>
<dbReference type="SMR" id="Q9M9R6"/>
<dbReference type="FunCoup" id="Q9M9R6">
    <property type="interactions" value="25"/>
</dbReference>
<dbReference type="PaxDb" id="3702-AT1G14470.1"/>
<dbReference type="EnsemblPlants" id="AT1G14470.1">
    <property type="protein sequence ID" value="AT1G14470.1"/>
    <property type="gene ID" value="AT1G14470"/>
</dbReference>
<dbReference type="GeneID" id="838009"/>
<dbReference type="Gramene" id="AT1G14470.1">
    <property type="protein sequence ID" value="AT1G14470.1"/>
    <property type="gene ID" value="AT1G14470"/>
</dbReference>
<dbReference type="KEGG" id="ath:AT1G14470"/>
<dbReference type="Araport" id="AT1G14470"/>
<dbReference type="TAIR" id="AT1G14470"/>
<dbReference type="eggNOG" id="KOG4197">
    <property type="taxonomic scope" value="Eukaryota"/>
</dbReference>
<dbReference type="HOGENOM" id="CLU_002706_30_3_1"/>
<dbReference type="InParanoid" id="Q9M9R6"/>
<dbReference type="OMA" id="DMHAKCR"/>
<dbReference type="PhylomeDB" id="Q9M9R6"/>
<dbReference type="PRO" id="PR:Q9M9R6"/>
<dbReference type="Proteomes" id="UP000006548">
    <property type="component" value="Chromosome 1"/>
</dbReference>
<dbReference type="ExpressionAtlas" id="Q9M9R6">
    <property type="expression patterns" value="baseline and differential"/>
</dbReference>
<dbReference type="GO" id="GO:0003723">
    <property type="term" value="F:RNA binding"/>
    <property type="evidence" value="ECO:0007669"/>
    <property type="project" value="InterPro"/>
</dbReference>
<dbReference type="GO" id="GO:0009451">
    <property type="term" value="P:RNA modification"/>
    <property type="evidence" value="ECO:0007669"/>
    <property type="project" value="InterPro"/>
</dbReference>
<dbReference type="FunFam" id="1.25.40.10:FF:001305">
    <property type="entry name" value="Pentatricopeptide repeat-containing protein At1g14470"/>
    <property type="match status" value="1"/>
</dbReference>
<dbReference type="FunFam" id="1.25.40.10:FF:002184">
    <property type="entry name" value="Pentatricopeptide repeat-containing protein At1g14470"/>
    <property type="match status" value="1"/>
</dbReference>
<dbReference type="FunFam" id="1.25.40.10:FF:000031">
    <property type="entry name" value="Pentatricopeptide repeat-containing protein mitochondrial"/>
    <property type="match status" value="1"/>
</dbReference>
<dbReference type="FunFam" id="1.25.40.10:FF:000596">
    <property type="entry name" value="Pentatricopeptide repeat-containing protein, mitochondrial"/>
    <property type="match status" value="1"/>
</dbReference>
<dbReference type="Gene3D" id="1.25.40.10">
    <property type="entry name" value="Tetratricopeptide repeat domain"/>
    <property type="match status" value="5"/>
</dbReference>
<dbReference type="InterPro" id="IPR002885">
    <property type="entry name" value="Pentatricopeptide_rpt"/>
</dbReference>
<dbReference type="InterPro" id="IPR046960">
    <property type="entry name" value="PPR_At4g14850-like_plant"/>
</dbReference>
<dbReference type="InterPro" id="IPR011990">
    <property type="entry name" value="TPR-like_helical_dom_sf"/>
</dbReference>
<dbReference type="NCBIfam" id="TIGR00756">
    <property type="entry name" value="PPR"/>
    <property type="match status" value="7"/>
</dbReference>
<dbReference type="PANTHER" id="PTHR47926">
    <property type="entry name" value="PENTATRICOPEPTIDE REPEAT-CONTAINING PROTEIN"/>
    <property type="match status" value="1"/>
</dbReference>
<dbReference type="PANTHER" id="PTHR47926:SF347">
    <property type="entry name" value="PENTATRICOPEPTIDE REPEAT-CONTAINING PROTEIN"/>
    <property type="match status" value="1"/>
</dbReference>
<dbReference type="Pfam" id="PF01535">
    <property type="entry name" value="PPR"/>
    <property type="match status" value="2"/>
</dbReference>
<dbReference type="Pfam" id="PF12854">
    <property type="entry name" value="PPR_1"/>
    <property type="match status" value="1"/>
</dbReference>
<dbReference type="Pfam" id="PF13041">
    <property type="entry name" value="PPR_2"/>
    <property type="match status" value="3"/>
</dbReference>
<dbReference type="PROSITE" id="PS51375">
    <property type="entry name" value="PPR"/>
    <property type="match status" value="13"/>
</dbReference>